<sequence>MSNPIYLALDLPRLDAAVALAQKVKGHVGGLKLGLEFFCAHGHHGVHEVAKVGLPIFLDLKLHDIPNTVAGAMQSIHVLEPAIVTIHAGGGRAMMEDAKAAAGEHTKVVAVTVLTSLDDADMSTMGVGGSAYDQAIRLADLAQEAGLDGIVCSGHEVGAIHKRWKNGFFVVPGLRPAEGKLGDQKRAVTPRAARDAGASVLVIGRPISRAEDPVAAARAIEATL</sequence>
<name>PYRF_NOVAD</name>
<comment type="function">
    <text evidence="1">Catalyzes the decarboxylation of orotidine 5'-monophosphate (OMP) to uridine 5'-monophosphate (UMP).</text>
</comment>
<comment type="catalytic activity">
    <reaction evidence="1">
        <text>orotidine 5'-phosphate + H(+) = UMP + CO2</text>
        <dbReference type="Rhea" id="RHEA:11596"/>
        <dbReference type="ChEBI" id="CHEBI:15378"/>
        <dbReference type="ChEBI" id="CHEBI:16526"/>
        <dbReference type="ChEBI" id="CHEBI:57538"/>
        <dbReference type="ChEBI" id="CHEBI:57865"/>
        <dbReference type="EC" id="4.1.1.23"/>
    </reaction>
</comment>
<comment type="pathway">
    <text evidence="1">Pyrimidine metabolism; UMP biosynthesis via de novo pathway; UMP from orotate: step 2/2.</text>
</comment>
<comment type="subunit">
    <text evidence="1">Homodimer.</text>
</comment>
<comment type="similarity">
    <text evidence="1">Belongs to the OMP decarboxylase family. Type 1 subfamily.</text>
</comment>
<organism>
    <name type="scientific">Novosphingobium aromaticivorans (strain ATCC 700278 / DSM 12444 / CCUG 56034 / CIP 105152 / NBRC 16084 / F199)</name>
    <dbReference type="NCBI Taxonomy" id="279238"/>
    <lineage>
        <taxon>Bacteria</taxon>
        <taxon>Pseudomonadati</taxon>
        <taxon>Pseudomonadota</taxon>
        <taxon>Alphaproteobacteria</taxon>
        <taxon>Sphingomonadales</taxon>
        <taxon>Sphingomonadaceae</taxon>
        <taxon>Novosphingobium</taxon>
    </lineage>
</organism>
<dbReference type="EC" id="4.1.1.23" evidence="1"/>
<dbReference type="EMBL" id="CP000248">
    <property type="protein sequence ID" value="ABD25751.1"/>
    <property type="molecule type" value="Genomic_DNA"/>
</dbReference>
<dbReference type="RefSeq" id="WP_011444965.1">
    <property type="nucleotide sequence ID" value="NC_007794.1"/>
</dbReference>
<dbReference type="SMR" id="Q2G8S2"/>
<dbReference type="STRING" id="279238.Saro_1307"/>
<dbReference type="KEGG" id="nar:Saro_1307"/>
<dbReference type="eggNOG" id="COG0284">
    <property type="taxonomic scope" value="Bacteria"/>
</dbReference>
<dbReference type="HOGENOM" id="CLU_067069_1_0_5"/>
<dbReference type="UniPathway" id="UPA00070">
    <property type="reaction ID" value="UER00120"/>
</dbReference>
<dbReference type="Proteomes" id="UP000009134">
    <property type="component" value="Chromosome"/>
</dbReference>
<dbReference type="GO" id="GO:0005829">
    <property type="term" value="C:cytosol"/>
    <property type="evidence" value="ECO:0007669"/>
    <property type="project" value="TreeGrafter"/>
</dbReference>
<dbReference type="GO" id="GO:0004590">
    <property type="term" value="F:orotidine-5'-phosphate decarboxylase activity"/>
    <property type="evidence" value="ECO:0007669"/>
    <property type="project" value="UniProtKB-UniRule"/>
</dbReference>
<dbReference type="GO" id="GO:0006207">
    <property type="term" value="P:'de novo' pyrimidine nucleobase biosynthetic process"/>
    <property type="evidence" value="ECO:0007669"/>
    <property type="project" value="InterPro"/>
</dbReference>
<dbReference type="GO" id="GO:0044205">
    <property type="term" value="P:'de novo' UMP biosynthetic process"/>
    <property type="evidence" value="ECO:0007669"/>
    <property type="project" value="UniProtKB-UniRule"/>
</dbReference>
<dbReference type="CDD" id="cd04725">
    <property type="entry name" value="OMP_decarboxylase_like"/>
    <property type="match status" value="1"/>
</dbReference>
<dbReference type="Gene3D" id="3.20.20.70">
    <property type="entry name" value="Aldolase class I"/>
    <property type="match status" value="1"/>
</dbReference>
<dbReference type="HAMAP" id="MF_01200_B">
    <property type="entry name" value="OMPdecase_type1_B"/>
    <property type="match status" value="1"/>
</dbReference>
<dbReference type="InterPro" id="IPR013785">
    <property type="entry name" value="Aldolase_TIM"/>
</dbReference>
<dbReference type="InterPro" id="IPR014732">
    <property type="entry name" value="OMPdecase"/>
</dbReference>
<dbReference type="InterPro" id="IPR018089">
    <property type="entry name" value="OMPdecase_AS"/>
</dbReference>
<dbReference type="InterPro" id="IPR047596">
    <property type="entry name" value="OMPdecase_bac"/>
</dbReference>
<dbReference type="InterPro" id="IPR001754">
    <property type="entry name" value="OMPdeCOase_dom"/>
</dbReference>
<dbReference type="InterPro" id="IPR011060">
    <property type="entry name" value="RibuloseP-bd_barrel"/>
</dbReference>
<dbReference type="NCBIfam" id="NF001273">
    <property type="entry name" value="PRK00230.1"/>
    <property type="match status" value="1"/>
</dbReference>
<dbReference type="NCBIfam" id="TIGR01740">
    <property type="entry name" value="pyrF"/>
    <property type="match status" value="1"/>
</dbReference>
<dbReference type="PANTHER" id="PTHR32119">
    <property type="entry name" value="OROTIDINE 5'-PHOSPHATE DECARBOXYLASE"/>
    <property type="match status" value="1"/>
</dbReference>
<dbReference type="PANTHER" id="PTHR32119:SF2">
    <property type="entry name" value="OROTIDINE 5'-PHOSPHATE DECARBOXYLASE"/>
    <property type="match status" value="1"/>
</dbReference>
<dbReference type="Pfam" id="PF00215">
    <property type="entry name" value="OMPdecase"/>
    <property type="match status" value="1"/>
</dbReference>
<dbReference type="SMART" id="SM00934">
    <property type="entry name" value="OMPdecase"/>
    <property type="match status" value="1"/>
</dbReference>
<dbReference type="SUPFAM" id="SSF51366">
    <property type="entry name" value="Ribulose-phoshate binding barrel"/>
    <property type="match status" value="1"/>
</dbReference>
<dbReference type="PROSITE" id="PS00156">
    <property type="entry name" value="OMPDECASE"/>
    <property type="match status" value="1"/>
</dbReference>
<feature type="chain" id="PRO_0000241882" description="Orotidine 5'-phosphate decarboxylase">
    <location>
        <begin position="1"/>
        <end position="224"/>
    </location>
</feature>
<feature type="active site" description="Proton donor" evidence="1">
    <location>
        <position position="61"/>
    </location>
</feature>
<feature type="binding site" evidence="1">
    <location>
        <position position="10"/>
    </location>
    <ligand>
        <name>substrate</name>
    </ligand>
</feature>
<feature type="binding site" evidence="1">
    <location>
        <position position="32"/>
    </location>
    <ligand>
        <name>substrate</name>
    </ligand>
</feature>
<feature type="binding site" evidence="1">
    <location>
        <begin position="59"/>
        <end position="68"/>
    </location>
    <ligand>
        <name>substrate</name>
    </ligand>
</feature>
<feature type="binding site" evidence="1">
    <location>
        <position position="115"/>
    </location>
    <ligand>
        <name>substrate</name>
    </ligand>
</feature>
<feature type="binding site" evidence="1">
    <location>
        <position position="175"/>
    </location>
    <ligand>
        <name>substrate</name>
    </ligand>
</feature>
<feature type="binding site" evidence="1">
    <location>
        <position position="184"/>
    </location>
    <ligand>
        <name>substrate</name>
    </ligand>
</feature>
<feature type="binding site" evidence="1">
    <location>
        <position position="204"/>
    </location>
    <ligand>
        <name>substrate</name>
    </ligand>
</feature>
<feature type="binding site" evidence="1">
    <location>
        <position position="205"/>
    </location>
    <ligand>
        <name>substrate</name>
    </ligand>
</feature>
<proteinExistence type="inferred from homology"/>
<accession>Q2G8S2</accession>
<gene>
    <name evidence="1" type="primary">pyrF</name>
    <name type="ordered locus">Saro_1307</name>
</gene>
<evidence type="ECO:0000255" key="1">
    <source>
        <dbReference type="HAMAP-Rule" id="MF_01200"/>
    </source>
</evidence>
<keyword id="KW-0210">Decarboxylase</keyword>
<keyword id="KW-0456">Lyase</keyword>
<keyword id="KW-0665">Pyrimidine biosynthesis</keyword>
<keyword id="KW-1185">Reference proteome</keyword>
<protein>
    <recommendedName>
        <fullName evidence="1">Orotidine 5'-phosphate decarboxylase</fullName>
        <ecNumber evidence="1">4.1.1.23</ecNumber>
    </recommendedName>
    <alternativeName>
        <fullName evidence="1">OMP decarboxylase</fullName>
        <shortName evidence="1">OMPDCase</shortName>
        <shortName evidence="1">OMPdecase</shortName>
    </alternativeName>
</protein>
<reference key="1">
    <citation type="submission" date="2006-01" db="EMBL/GenBank/DDBJ databases">
        <title>Complete sequence of Novosphingobium aromaticivorans DSM 12444.</title>
        <authorList>
            <consortium name="US DOE Joint Genome Institute"/>
            <person name="Copeland A."/>
            <person name="Lucas S."/>
            <person name="Lapidus A."/>
            <person name="Barry K."/>
            <person name="Detter J.C."/>
            <person name="Glavina T."/>
            <person name="Hammon N."/>
            <person name="Israni S."/>
            <person name="Pitluck S."/>
            <person name="Chain P."/>
            <person name="Malfatti S."/>
            <person name="Shin M."/>
            <person name="Vergez L."/>
            <person name="Schmutz J."/>
            <person name="Larimer F."/>
            <person name="Land M."/>
            <person name="Kyrpides N."/>
            <person name="Ivanova N."/>
            <person name="Fredrickson J."/>
            <person name="Balkwill D."/>
            <person name="Romine M.F."/>
            <person name="Richardson P."/>
        </authorList>
    </citation>
    <scope>NUCLEOTIDE SEQUENCE [LARGE SCALE GENOMIC DNA]</scope>
    <source>
        <strain>ATCC 700278 / DSM 12444 / CCUG 56034 / CIP 105152 / NBRC 16084 / F199</strain>
    </source>
</reference>